<protein>
    <recommendedName>
        <fullName>Interferon gamma</fullName>
        <shortName>IFN-gamma</shortName>
    </recommendedName>
</protein>
<reference key="1">
    <citation type="submission" date="2006-03" db="EMBL/GenBank/DDBJ databases">
        <title>Molecular cloning and expression of gamma IFN from giant panda.</title>
        <authorList>
            <person name="Fan Y."/>
            <person name="Lai B."/>
            <person name="Xu L."/>
            <person name="Wu Z."/>
            <person name="Zou F."/>
            <person name="Yue B."/>
            <person name="Zhang Z."/>
        </authorList>
    </citation>
    <scope>NUCLEOTIDE SEQUENCE [MRNA]</scope>
</reference>
<reference key="2">
    <citation type="submission" date="2006-03" db="EMBL/GenBank/DDBJ databases">
        <title>Molecular cloning and expression of giant panda interferon-gamma.</title>
        <authorList>
            <person name="Xu L."/>
            <person name="Zeng B."/>
            <person name="Xie Z."/>
            <person name="Yue B."/>
            <person name="Zhang Z."/>
            <person name="Zou F."/>
        </authorList>
    </citation>
    <scope>NUCLEOTIDE SEQUENCE [MRNA]</scope>
</reference>
<reference key="3">
    <citation type="submission" date="2006-05" db="EMBL/GenBank/DDBJ databases">
        <title>Molecular cloning and sequence analysis of IFN-gamma gene in Ailuropoda melanoleuca.</title>
        <authorList>
            <person name="Huang D.C."/>
            <person name="Yang G.Y."/>
            <person name="Zhang Z.H."/>
            <person name="Zhang A.J."/>
            <person name="Guo W.Z."/>
            <person name="Wang C.D."/>
            <person name="Hou R."/>
            <person name="Sheng F.J."/>
        </authorList>
    </citation>
    <scope>NUCLEOTIDE SEQUENCE [MRNA]</scope>
</reference>
<keyword id="KW-0051">Antiviral defense</keyword>
<keyword id="KW-0202">Cytokine</keyword>
<keyword id="KW-0325">Glycoprotein</keyword>
<keyword id="KW-0341">Growth regulation</keyword>
<keyword id="KW-0873">Pyrrolidone carboxylic acid</keyword>
<keyword id="KW-1185">Reference proteome</keyword>
<keyword id="KW-0964">Secreted</keyword>
<keyword id="KW-0732">Signal</keyword>
<dbReference type="EMBL" id="DQ010029">
    <property type="protein sequence ID" value="AAY26152.2"/>
    <property type="molecule type" value="mRNA"/>
</dbReference>
<dbReference type="EMBL" id="DQ450843">
    <property type="protein sequence ID" value="ABE02189.1"/>
    <property type="molecule type" value="mRNA"/>
</dbReference>
<dbReference type="EMBL" id="DQ630727">
    <property type="protein sequence ID" value="ABF82436.1"/>
    <property type="molecule type" value="mRNA"/>
</dbReference>
<dbReference type="SMR" id="Q4ZH68"/>
<dbReference type="FunCoup" id="Q4ZH68">
    <property type="interactions" value="62"/>
</dbReference>
<dbReference type="STRING" id="9646.ENSAMEP00000009180"/>
<dbReference type="GlyCosmos" id="Q4ZH68">
    <property type="glycosylation" value="2 sites, No reported glycans"/>
</dbReference>
<dbReference type="eggNOG" id="ENOG502SBGW">
    <property type="taxonomic scope" value="Eukaryota"/>
</dbReference>
<dbReference type="InParanoid" id="Q4ZH68"/>
<dbReference type="Proteomes" id="UP000008912">
    <property type="component" value="Unassembled WGS sequence"/>
</dbReference>
<dbReference type="GO" id="GO:0005615">
    <property type="term" value="C:extracellular space"/>
    <property type="evidence" value="ECO:0007669"/>
    <property type="project" value="UniProtKB-KW"/>
</dbReference>
<dbReference type="GO" id="GO:0005125">
    <property type="term" value="F:cytokine activity"/>
    <property type="evidence" value="ECO:0007669"/>
    <property type="project" value="UniProtKB-KW"/>
</dbReference>
<dbReference type="GO" id="GO:0005133">
    <property type="term" value="F:type II interferon receptor binding"/>
    <property type="evidence" value="ECO:0007669"/>
    <property type="project" value="InterPro"/>
</dbReference>
<dbReference type="GO" id="GO:0002250">
    <property type="term" value="P:adaptive immune response"/>
    <property type="evidence" value="ECO:0007669"/>
    <property type="project" value="TreeGrafter"/>
</dbReference>
<dbReference type="GO" id="GO:0051607">
    <property type="term" value="P:defense response to virus"/>
    <property type="evidence" value="ECO:0007669"/>
    <property type="project" value="UniProtKB-KW"/>
</dbReference>
<dbReference type="GO" id="GO:0006959">
    <property type="term" value="P:humoral immune response"/>
    <property type="evidence" value="ECO:0007669"/>
    <property type="project" value="TreeGrafter"/>
</dbReference>
<dbReference type="GO" id="GO:0010508">
    <property type="term" value="P:positive regulation of autophagy"/>
    <property type="evidence" value="ECO:0000250"/>
    <property type="project" value="UniProtKB"/>
</dbReference>
<dbReference type="FunFam" id="1.20.1250.10:FF:000007">
    <property type="entry name" value="Interferon gamma"/>
    <property type="match status" value="1"/>
</dbReference>
<dbReference type="Gene3D" id="1.20.1250.10">
    <property type="match status" value="1"/>
</dbReference>
<dbReference type="InterPro" id="IPR009079">
    <property type="entry name" value="4_helix_cytokine-like_core"/>
</dbReference>
<dbReference type="InterPro" id="IPR002069">
    <property type="entry name" value="Interferon_gamma"/>
</dbReference>
<dbReference type="PANTHER" id="PTHR11419">
    <property type="entry name" value="INTERFERON GAMMA"/>
    <property type="match status" value="1"/>
</dbReference>
<dbReference type="PANTHER" id="PTHR11419:SF0">
    <property type="entry name" value="INTERFERON GAMMA"/>
    <property type="match status" value="1"/>
</dbReference>
<dbReference type="Pfam" id="PF00714">
    <property type="entry name" value="IFN-gamma"/>
    <property type="match status" value="1"/>
</dbReference>
<dbReference type="PIRSF" id="PIRSF001936">
    <property type="entry name" value="IFN-gamma"/>
    <property type="match status" value="1"/>
</dbReference>
<dbReference type="SUPFAM" id="SSF47266">
    <property type="entry name" value="4-helical cytokines"/>
    <property type="match status" value="1"/>
</dbReference>
<organism>
    <name type="scientific">Ailuropoda melanoleuca</name>
    <name type="common">Giant panda</name>
    <dbReference type="NCBI Taxonomy" id="9646"/>
    <lineage>
        <taxon>Eukaryota</taxon>
        <taxon>Metazoa</taxon>
        <taxon>Chordata</taxon>
        <taxon>Craniata</taxon>
        <taxon>Vertebrata</taxon>
        <taxon>Euteleostomi</taxon>
        <taxon>Mammalia</taxon>
        <taxon>Eutheria</taxon>
        <taxon>Laurasiatheria</taxon>
        <taxon>Carnivora</taxon>
        <taxon>Caniformia</taxon>
        <taxon>Ursidae</taxon>
        <taxon>Ailuropoda</taxon>
    </lineage>
</organism>
<evidence type="ECO:0000250" key="1"/>
<evidence type="ECO:0000250" key="2">
    <source>
        <dbReference type="UniProtKB" id="P01579"/>
    </source>
</evidence>
<evidence type="ECO:0000250" key="3">
    <source>
        <dbReference type="UniProtKB" id="P01580"/>
    </source>
</evidence>
<evidence type="ECO:0000255" key="4"/>
<evidence type="ECO:0000305" key="5"/>
<proteinExistence type="evidence at transcript level"/>
<feature type="signal peptide" evidence="1">
    <location>
        <begin position="1"/>
        <end position="23"/>
    </location>
</feature>
<feature type="chain" id="PRO_0000253747" description="Interferon gamma">
    <location>
        <begin position="24"/>
        <end position="166"/>
    </location>
</feature>
<feature type="modified residue" description="Pyrrolidone carboxylic acid" evidence="2">
    <location>
        <position position="24"/>
    </location>
</feature>
<feature type="glycosylation site" description="N-linked (GlcNAc...) asparagine" evidence="4">
    <location>
        <position position="39"/>
    </location>
</feature>
<feature type="glycosylation site" description="N-linked (GlcNAc...) asparagine" evidence="4">
    <location>
        <position position="106"/>
    </location>
</feature>
<feature type="sequence conflict" description="In Ref. 3; ABF82436." evidence="5" ref="3">
    <original>T</original>
    <variation>R</variation>
    <location>
        <position position="150"/>
    </location>
</feature>
<feature type="sequence conflict" description="In Ref. 3; ABF82436." evidence="5" ref="3">
    <original>R</original>
    <variation>G</variation>
    <location>
        <position position="163"/>
    </location>
</feature>
<comment type="function">
    <text evidence="2 3">Type II interferon produced by immune cells such as T-cells and NK cells that plays crucial roles in antimicrobial, antiviral, and antitumor responses by activating effector immune cells and enhancing antigen presentation. Primarily signals through the JAK-STAT pathway after interaction with its receptor IFNGR1 to affect gene regulation. Upon IFNG binding, IFNGR1 intracellular domain opens out to allow association of downstream signaling components JAK2, JAK1 and STAT1, leading to STAT1 activation, nuclear translocation and transcription of IFNG-regulated genes. Many of the induced genes are transcription factors such as IRF1 that are able to further drive regulation of a next wave of transcription. Plays a role in class I antigen presentation pathway by inducing a replacement of catalytic proteasome subunits with immunoproteasome subunits. In turn, increases the quantity, quality, and repertoire of peptides for class I MHC loading. Increases the efficiency of peptide generation also by inducing the expression of activator PA28 that associates with the proteasome and alters its proteolytic cleavage preference. Up-regulates as well MHC II complexes on the cell surface by promoting expression of several key molecules such as cathepsins B/CTSB, H/CTSH, and L/CTSL (By similarity). Participates in the regulation of hematopoietic stem cells during development and under homeostatic conditions by affecting their development, quiescence, and differentiation (By similarity).</text>
</comment>
<comment type="subunit">
    <text evidence="2">Homodimer. Interacts with IFNGR1 (via extracellular domain); this interaction promotes IFNGR1 dimerization.</text>
</comment>
<comment type="subcellular location">
    <subcellularLocation>
        <location evidence="2">Secreted</location>
    </subcellularLocation>
</comment>
<comment type="tissue specificity">
    <text>Released primarily from activated T lymphocytes.</text>
</comment>
<comment type="similarity">
    <text evidence="5">Belongs to the type II (or gamma) interferon family.</text>
</comment>
<name>IFNG_AILME</name>
<gene>
    <name type="primary">IFNG</name>
</gene>
<sequence length="166" mass="19558">MNYTSYILAFQLCVILCSSGYYCQAMFFKEIENLKEYFNASNPDVADGGPLFLDILKNWREESDKTIIQSQIVSFYLKLFENFKDNQIIQRSMDTIKEDMLFKFFNSSTSKRSDFLKLIQIPVNDMQVQRKAINELIKVMNDLSPRSNLTKRKRSQNLFRGRRASK</sequence>
<accession>Q4ZH68</accession>
<accession>Q197Z4</accession>